<gene>
    <name evidence="1" type="primary">astB</name>
    <name type="ordered locus">Sala_1941</name>
</gene>
<accession>Q1GRR9</accession>
<evidence type="ECO:0000255" key="1">
    <source>
        <dbReference type="HAMAP-Rule" id="MF_01172"/>
    </source>
</evidence>
<protein>
    <recommendedName>
        <fullName evidence="1">N-succinylarginine dihydrolase</fullName>
        <ecNumber evidence="1">3.5.3.23</ecNumber>
    </recommendedName>
</protein>
<keyword id="KW-0056">Arginine metabolism</keyword>
<keyword id="KW-0378">Hydrolase</keyword>
<keyword id="KW-1185">Reference proteome</keyword>
<reference key="1">
    <citation type="journal article" date="2009" name="Proc. Natl. Acad. Sci. U.S.A.">
        <title>The genomic basis of trophic strategy in marine bacteria.</title>
        <authorList>
            <person name="Lauro F.M."/>
            <person name="McDougald D."/>
            <person name="Thomas T."/>
            <person name="Williams T.J."/>
            <person name="Egan S."/>
            <person name="Rice S."/>
            <person name="DeMaere M.Z."/>
            <person name="Ting L."/>
            <person name="Ertan H."/>
            <person name="Johnson J."/>
            <person name="Ferriera S."/>
            <person name="Lapidus A."/>
            <person name="Anderson I."/>
            <person name="Kyrpides N."/>
            <person name="Munk A.C."/>
            <person name="Detter C."/>
            <person name="Han C.S."/>
            <person name="Brown M.V."/>
            <person name="Robb F.T."/>
            <person name="Kjelleberg S."/>
            <person name="Cavicchioli R."/>
        </authorList>
    </citation>
    <scope>NUCLEOTIDE SEQUENCE [LARGE SCALE GENOMIC DNA]</scope>
    <source>
        <strain>DSM 13593 / LMG 18877 / RB2256</strain>
    </source>
</reference>
<dbReference type="EC" id="3.5.3.23" evidence="1"/>
<dbReference type="EMBL" id="CP000356">
    <property type="protein sequence ID" value="ABF53653.1"/>
    <property type="molecule type" value="Genomic_DNA"/>
</dbReference>
<dbReference type="RefSeq" id="WP_011542229.1">
    <property type="nucleotide sequence ID" value="NC_008048.1"/>
</dbReference>
<dbReference type="SMR" id="Q1GRR9"/>
<dbReference type="STRING" id="317655.Sala_1941"/>
<dbReference type="KEGG" id="sal:Sala_1941"/>
<dbReference type="eggNOG" id="COG3724">
    <property type="taxonomic scope" value="Bacteria"/>
</dbReference>
<dbReference type="HOGENOM" id="CLU_053835_0_0_5"/>
<dbReference type="OrthoDB" id="248552at2"/>
<dbReference type="UniPathway" id="UPA00185">
    <property type="reaction ID" value="UER00280"/>
</dbReference>
<dbReference type="Proteomes" id="UP000006578">
    <property type="component" value="Chromosome"/>
</dbReference>
<dbReference type="GO" id="GO:0009015">
    <property type="term" value="F:N-succinylarginine dihydrolase activity"/>
    <property type="evidence" value="ECO:0007669"/>
    <property type="project" value="UniProtKB-UniRule"/>
</dbReference>
<dbReference type="GO" id="GO:0019544">
    <property type="term" value="P:arginine catabolic process to glutamate"/>
    <property type="evidence" value="ECO:0007669"/>
    <property type="project" value="UniProtKB-UniRule"/>
</dbReference>
<dbReference type="GO" id="GO:0019545">
    <property type="term" value="P:arginine catabolic process to succinate"/>
    <property type="evidence" value="ECO:0007669"/>
    <property type="project" value="UniProtKB-UniRule"/>
</dbReference>
<dbReference type="Gene3D" id="3.75.10.20">
    <property type="entry name" value="Succinylarginine dihydrolase"/>
    <property type="match status" value="1"/>
</dbReference>
<dbReference type="HAMAP" id="MF_01172">
    <property type="entry name" value="AstB"/>
    <property type="match status" value="1"/>
</dbReference>
<dbReference type="InterPro" id="IPR037031">
    <property type="entry name" value="AstB_sf"/>
</dbReference>
<dbReference type="InterPro" id="IPR007079">
    <property type="entry name" value="SuccinylArg_d-Hdrlase_AstB"/>
</dbReference>
<dbReference type="NCBIfam" id="NF009789">
    <property type="entry name" value="PRK13281.1"/>
    <property type="match status" value="1"/>
</dbReference>
<dbReference type="PANTHER" id="PTHR30420">
    <property type="entry name" value="N-SUCCINYLARGININE DIHYDROLASE"/>
    <property type="match status" value="1"/>
</dbReference>
<dbReference type="PANTHER" id="PTHR30420:SF2">
    <property type="entry name" value="N-SUCCINYLARGININE DIHYDROLASE"/>
    <property type="match status" value="1"/>
</dbReference>
<dbReference type="Pfam" id="PF04996">
    <property type="entry name" value="AstB"/>
    <property type="match status" value="1"/>
</dbReference>
<dbReference type="SUPFAM" id="SSF55909">
    <property type="entry name" value="Pentein"/>
    <property type="match status" value="1"/>
</dbReference>
<comment type="function">
    <text evidence="1">Catalyzes the hydrolysis of N(2)-succinylarginine into N(2)-succinylornithine, ammonia and CO(2).</text>
</comment>
<comment type="catalytic activity">
    <reaction evidence="1">
        <text>N(2)-succinyl-L-arginine + 2 H2O + 2 H(+) = N(2)-succinyl-L-ornithine + 2 NH4(+) + CO2</text>
        <dbReference type="Rhea" id="RHEA:19533"/>
        <dbReference type="ChEBI" id="CHEBI:15377"/>
        <dbReference type="ChEBI" id="CHEBI:15378"/>
        <dbReference type="ChEBI" id="CHEBI:16526"/>
        <dbReference type="ChEBI" id="CHEBI:28938"/>
        <dbReference type="ChEBI" id="CHEBI:58241"/>
        <dbReference type="ChEBI" id="CHEBI:58514"/>
        <dbReference type="EC" id="3.5.3.23"/>
    </reaction>
</comment>
<comment type="pathway">
    <text evidence="1">Amino-acid degradation; L-arginine degradation via AST pathway; L-glutamate and succinate from L-arginine: step 2/5.</text>
</comment>
<comment type="subunit">
    <text evidence="1">Homodimer.</text>
</comment>
<comment type="similarity">
    <text evidence="1">Belongs to the succinylarginine dihydrolase family.</text>
</comment>
<feature type="chain" id="PRO_0000262380" description="N-succinylarginine dihydrolase">
    <location>
        <begin position="1"/>
        <end position="415"/>
    </location>
</feature>
<feature type="active site" evidence="1">
    <location>
        <position position="161"/>
    </location>
</feature>
<feature type="active site" evidence="1">
    <location>
        <position position="229"/>
    </location>
</feature>
<feature type="active site" description="Nucleophile" evidence="1">
    <location>
        <position position="346"/>
    </location>
</feature>
<feature type="binding site" evidence="1">
    <location>
        <begin position="18"/>
        <end position="27"/>
    </location>
    <ligand>
        <name>substrate</name>
    </ligand>
</feature>
<feature type="binding site" evidence="1">
    <location>
        <position position="100"/>
    </location>
    <ligand>
        <name>substrate</name>
    </ligand>
</feature>
<feature type="binding site" evidence="1">
    <location>
        <begin position="127"/>
        <end position="128"/>
    </location>
    <ligand>
        <name>substrate</name>
    </ligand>
</feature>
<feature type="binding site" evidence="1">
    <location>
        <position position="193"/>
    </location>
    <ligand>
        <name>substrate</name>
    </ligand>
</feature>
<feature type="binding site" evidence="1">
    <location>
        <position position="231"/>
    </location>
    <ligand>
        <name>substrate</name>
    </ligand>
</feature>
<feature type="binding site" evidence="1">
    <location>
        <position position="340"/>
    </location>
    <ligand>
        <name>substrate</name>
    </ligand>
</feature>
<organism>
    <name type="scientific">Sphingopyxis alaskensis (strain DSM 13593 / LMG 18877 / RB2256)</name>
    <name type="common">Sphingomonas alaskensis</name>
    <dbReference type="NCBI Taxonomy" id="317655"/>
    <lineage>
        <taxon>Bacteria</taxon>
        <taxon>Pseudomonadati</taxon>
        <taxon>Pseudomonadota</taxon>
        <taxon>Alphaproteobacteria</taxon>
        <taxon>Sphingomonadales</taxon>
        <taxon>Sphingomonadaceae</taxon>
        <taxon>Sphingopyxis</taxon>
    </lineage>
</organism>
<proteinExistence type="inferred from homology"/>
<sequence length="415" mass="44356">MLTEINFDGIIGPTHNYAGLSRGNIASASHAGDVSQPRAAALQGIDKMRHNLVLGLPQGFFVPLDRPDAPWLAALGTSVEKAEGHLRAQAWSASSMWAANAATVSPAPDSADGKCHLTVANLVTMPHRSHEWPGTLAQLRLAFAHPAFSVHPPVPAPFGDEGAANHMRLCSGHDRVGVEIFVYGVAGGRFPARQHLDASKAIARRHRLDPARTLFIRQSDTAIQGGAFHNDVVAVANEHVLFTHETAFEDREAAHAEIRAAFPAVEIVEVPASAVSLAHAIKSYLFNAQLVTLPEGGMGLVLPTEAHETPAVWNWLEAMIVGNGPIRRLFPVDVRQSMANGGGPACLRLRVVADPATVDPRFLADEAKLDRIAGVVAKHWPEAIAPADLASTTLLHDVRRARLALLDALDLSELG</sequence>
<name>ASTB_SPHAL</name>